<feature type="chain" id="PRO_0000304153" description="Mediator of RNA polymerase II transcription subunit 9">
    <location>
        <begin position="1"/>
        <end position="152"/>
    </location>
</feature>
<feature type="coiled-coil region" evidence="2">
    <location>
        <begin position="98"/>
        <end position="150"/>
    </location>
</feature>
<protein>
    <recommendedName>
        <fullName>Mediator of RNA polymerase II transcription subunit 9</fullName>
    </recommendedName>
    <alternativeName>
        <fullName>Mediator complex subunit 9</fullName>
    </alternativeName>
</protein>
<comment type="function">
    <text evidence="1">Component of the Mediator complex, a coactivator involved in the regulated transcription of nearly all RNA polymerase II-dependent genes. Mediator functions as a bridge to convey information from gene-specific regulatory proteins to the basal RNA polymerase II transcription machinery. Mediator is recruited to promoters by direct interactions with regulatory proteins and serves as a scaffold for the assembly of a functional preinitiation complex with RNA polymerase II and the general transcription factors (By similarity).</text>
</comment>
<comment type="subunit">
    <text evidence="1">Component of the Mediator complex.</text>
</comment>
<comment type="subcellular location">
    <subcellularLocation>
        <location evidence="1">Nucleus</location>
    </subcellularLocation>
</comment>
<comment type="similarity">
    <text evidence="3">Belongs to the Mediator complex subunit 9 family.</text>
</comment>
<proteinExistence type="inferred from homology"/>
<dbReference type="EMBL" id="CR380955">
    <property type="protein sequence ID" value="CAG60436.1"/>
    <property type="molecule type" value="Genomic_DNA"/>
</dbReference>
<dbReference type="RefSeq" id="XP_447499.1">
    <property type="nucleotide sequence ID" value="XM_447499.1"/>
</dbReference>
<dbReference type="SMR" id="Q6FQJ5"/>
<dbReference type="FunCoup" id="Q6FQJ5">
    <property type="interactions" value="150"/>
</dbReference>
<dbReference type="STRING" id="284593.Q6FQJ5"/>
<dbReference type="EnsemblFungi" id="CAGL0I05742g-T">
    <property type="protein sequence ID" value="CAGL0I05742g-T-p1"/>
    <property type="gene ID" value="CAGL0I05742g"/>
</dbReference>
<dbReference type="KEGG" id="cgr:2889346"/>
<dbReference type="CGD" id="CAL0130035">
    <property type="gene designation" value="CAGL0I05742g"/>
</dbReference>
<dbReference type="VEuPathDB" id="FungiDB:CAGL0I05742g"/>
<dbReference type="eggNOG" id="ENOG502S8AG">
    <property type="taxonomic scope" value="Eukaryota"/>
</dbReference>
<dbReference type="HOGENOM" id="CLU_143643_0_0_1"/>
<dbReference type="InParanoid" id="Q6FQJ5"/>
<dbReference type="OMA" id="PHIFYAL"/>
<dbReference type="Proteomes" id="UP000002428">
    <property type="component" value="Chromosome I"/>
</dbReference>
<dbReference type="GO" id="GO:0070847">
    <property type="term" value="C:core mediator complex"/>
    <property type="evidence" value="ECO:0007669"/>
    <property type="project" value="EnsemblFungi"/>
</dbReference>
<dbReference type="GO" id="GO:0005829">
    <property type="term" value="C:cytosol"/>
    <property type="evidence" value="ECO:0007669"/>
    <property type="project" value="EnsemblFungi"/>
</dbReference>
<dbReference type="GO" id="GO:0016592">
    <property type="term" value="C:mediator complex"/>
    <property type="evidence" value="ECO:0007669"/>
    <property type="project" value="InterPro"/>
</dbReference>
<dbReference type="GO" id="GO:0005198">
    <property type="term" value="F:structural molecule activity"/>
    <property type="evidence" value="ECO:0007669"/>
    <property type="project" value="EnsemblFungi"/>
</dbReference>
<dbReference type="GO" id="GO:0003713">
    <property type="term" value="F:transcription coactivator activity"/>
    <property type="evidence" value="ECO:0007669"/>
    <property type="project" value="EnsemblFungi"/>
</dbReference>
<dbReference type="GO" id="GO:0000122">
    <property type="term" value="P:negative regulation of transcription by RNA polymerase II"/>
    <property type="evidence" value="ECO:0007669"/>
    <property type="project" value="EnsemblFungi"/>
</dbReference>
<dbReference type="GO" id="GO:0032968">
    <property type="term" value="P:positive regulation of transcription elongation by RNA polymerase II"/>
    <property type="evidence" value="ECO:0007669"/>
    <property type="project" value="EnsemblFungi"/>
</dbReference>
<dbReference type="GO" id="GO:0060261">
    <property type="term" value="P:positive regulation of transcription initiation by RNA polymerase II"/>
    <property type="evidence" value="ECO:0007669"/>
    <property type="project" value="EnsemblFungi"/>
</dbReference>
<dbReference type="GO" id="GO:0051123">
    <property type="term" value="P:RNA polymerase II preinitiation complex assembly"/>
    <property type="evidence" value="ECO:0007669"/>
    <property type="project" value="EnsemblFungi"/>
</dbReference>
<dbReference type="CDD" id="cd21431">
    <property type="entry name" value="Med9-C"/>
    <property type="match status" value="1"/>
</dbReference>
<dbReference type="InterPro" id="IPR011425">
    <property type="entry name" value="Med9"/>
</dbReference>
<dbReference type="Pfam" id="PF07544">
    <property type="entry name" value="Med9"/>
    <property type="match status" value="1"/>
</dbReference>
<reference key="1">
    <citation type="journal article" date="2004" name="Nature">
        <title>Genome evolution in yeasts.</title>
        <authorList>
            <person name="Dujon B."/>
            <person name="Sherman D."/>
            <person name="Fischer G."/>
            <person name="Durrens P."/>
            <person name="Casaregola S."/>
            <person name="Lafontaine I."/>
            <person name="de Montigny J."/>
            <person name="Marck C."/>
            <person name="Neuveglise C."/>
            <person name="Talla E."/>
            <person name="Goffard N."/>
            <person name="Frangeul L."/>
            <person name="Aigle M."/>
            <person name="Anthouard V."/>
            <person name="Babour A."/>
            <person name="Barbe V."/>
            <person name="Barnay S."/>
            <person name="Blanchin S."/>
            <person name="Beckerich J.-M."/>
            <person name="Beyne E."/>
            <person name="Bleykasten C."/>
            <person name="Boisrame A."/>
            <person name="Boyer J."/>
            <person name="Cattolico L."/>
            <person name="Confanioleri F."/>
            <person name="de Daruvar A."/>
            <person name="Despons L."/>
            <person name="Fabre E."/>
            <person name="Fairhead C."/>
            <person name="Ferry-Dumazet H."/>
            <person name="Groppi A."/>
            <person name="Hantraye F."/>
            <person name="Hennequin C."/>
            <person name="Jauniaux N."/>
            <person name="Joyet P."/>
            <person name="Kachouri R."/>
            <person name="Kerrest A."/>
            <person name="Koszul R."/>
            <person name="Lemaire M."/>
            <person name="Lesur I."/>
            <person name="Ma L."/>
            <person name="Muller H."/>
            <person name="Nicaud J.-M."/>
            <person name="Nikolski M."/>
            <person name="Oztas S."/>
            <person name="Ozier-Kalogeropoulos O."/>
            <person name="Pellenz S."/>
            <person name="Potier S."/>
            <person name="Richard G.-F."/>
            <person name="Straub M.-L."/>
            <person name="Suleau A."/>
            <person name="Swennen D."/>
            <person name="Tekaia F."/>
            <person name="Wesolowski-Louvel M."/>
            <person name="Westhof E."/>
            <person name="Wirth B."/>
            <person name="Zeniou-Meyer M."/>
            <person name="Zivanovic Y."/>
            <person name="Bolotin-Fukuhara M."/>
            <person name="Thierry A."/>
            <person name="Bouchier C."/>
            <person name="Caudron B."/>
            <person name="Scarpelli C."/>
            <person name="Gaillardin C."/>
            <person name="Weissenbach J."/>
            <person name="Wincker P."/>
            <person name="Souciet J.-L."/>
        </authorList>
    </citation>
    <scope>NUCLEOTIDE SEQUENCE [LARGE SCALE GENOMIC DNA]</scope>
    <source>
        <strain>ATCC 2001 / BCRC 20586 / JCM 3761 / NBRC 0622 / NRRL Y-65 / CBS 138</strain>
    </source>
</reference>
<evidence type="ECO:0000250" key="1"/>
<evidence type="ECO:0000255" key="2"/>
<evidence type="ECO:0000305" key="3"/>
<name>MED9_CANGA</name>
<accession>Q6FQJ5</accession>
<sequence length="152" mass="17522">MTAPRLISKYRIQIHRISENMVLNNDGLKEISTLLVSASDREPEVKLEKTKDNSSSDITTPPAEFIPSIFFSLHKIRKDPNNVSSQLETSTGFIRHRIKRCKALLQENEEVRNLLANSIEEWENIIADKEQQLRVKAKVLRDLDARIEKITN</sequence>
<gene>
    <name type="primary">CSE2</name>
    <name type="synonym">MED9</name>
    <name type="ordered locus">CAGL0I05742g</name>
</gene>
<keyword id="KW-0010">Activator</keyword>
<keyword id="KW-0175">Coiled coil</keyword>
<keyword id="KW-0539">Nucleus</keyword>
<keyword id="KW-1185">Reference proteome</keyword>
<keyword id="KW-0804">Transcription</keyword>
<keyword id="KW-0805">Transcription regulation</keyword>
<organism>
    <name type="scientific">Candida glabrata (strain ATCC 2001 / BCRC 20586 / JCM 3761 / NBRC 0622 / NRRL Y-65 / CBS 138)</name>
    <name type="common">Yeast</name>
    <name type="synonym">Nakaseomyces glabratus</name>
    <dbReference type="NCBI Taxonomy" id="284593"/>
    <lineage>
        <taxon>Eukaryota</taxon>
        <taxon>Fungi</taxon>
        <taxon>Dikarya</taxon>
        <taxon>Ascomycota</taxon>
        <taxon>Saccharomycotina</taxon>
        <taxon>Saccharomycetes</taxon>
        <taxon>Saccharomycetales</taxon>
        <taxon>Saccharomycetaceae</taxon>
        <taxon>Nakaseomyces</taxon>
    </lineage>
</organism>